<organism>
    <name type="scientific">Anemonia sulcata</name>
    <name type="common">Mediterranean snakelocks sea anemone</name>
    <dbReference type="NCBI Taxonomy" id="6108"/>
    <lineage>
        <taxon>Eukaryota</taxon>
        <taxon>Metazoa</taxon>
        <taxon>Cnidaria</taxon>
        <taxon>Anthozoa</taxon>
        <taxon>Hexacorallia</taxon>
        <taxon>Actiniaria</taxon>
        <taxon>Actiniidae</taxon>
        <taxon>Anemonia</taxon>
    </lineage>
</organism>
<keyword id="KW-0903">Direct protein sequencing</keyword>
<keyword id="KW-1015">Disulfide bond</keyword>
<keyword id="KW-0872">Ion channel impairing toxin</keyword>
<keyword id="KW-0166">Nematocyst</keyword>
<keyword id="KW-0528">Neurotoxin</keyword>
<keyword id="KW-0964">Secreted</keyword>
<keyword id="KW-0800">Toxin</keyword>
<keyword id="KW-0738">Voltage-gated sodium channel impairing toxin</keyword>
<name>NA15_ANESU</name>
<accession>P01529</accession>
<evidence type="ECO:0000250" key="1">
    <source>
        <dbReference type="UniProtKB" id="P01528"/>
    </source>
</evidence>
<evidence type="ECO:0000269" key="2">
    <source>
    </source>
</evidence>
<evidence type="ECO:0000303" key="3">
    <source>
    </source>
</evidence>
<evidence type="ECO:0000303" key="4">
    <source>
    </source>
</evidence>
<evidence type="ECO:0000305" key="5"/>
<sequence length="46" mass="4884">GVPCLCDSDGPSVRGNTLSGILWLAGCPSGWHNCKKHKPTIGWCCK</sequence>
<feature type="chain" id="PRO_0000221514" description="Delta-actitoxin-Avd1d" evidence="2">
    <location>
        <begin position="1"/>
        <end position="46"/>
    </location>
</feature>
<feature type="disulfide bond" evidence="1">
    <location>
        <begin position="4"/>
        <end position="44"/>
    </location>
</feature>
<feature type="disulfide bond" evidence="1">
    <location>
        <begin position="6"/>
        <end position="34"/>
    </location>
</feature>
<feature type="disulfide bond" evidence="1">
    <location>
        <begin position="27"/>
        <end position="45"/>
    </location>
</feature>
<feature type="sequence variant" description="In 50% of the molecules.">
    <original>P</original>
    <variation>G</variation>
    <location>
        <position position="39"/>
    </location>
</feature>
<reference key="1">
    <citation type="journal article" date="1982" name="Biochem. Biophys. Res. Commun.">
        <title>The amino acid sequence of toxin V from Anemonia sulcata.</title>
        <authorList>
            <person name="Scheffler J.-J."/>
            <person name="Tsugita A."/>
            <person name="Linden G."/>
            <person name="Schweitz H."/>
            <person name="Lazdunski M."/>
        </authorList>
    </citation>
    <scope>PROTEIN SEQUENCE</scope>
    <scope>FUNCTION</scope>
    <source>
        <tissue>Nematoblast</tissue>
    </source>
</reference>
<reference key="2">
    <citation type="journal article" date="2012" name="Toxicon">
        <title>Development of a rational nomenclature for naming peptide and protein toxins from sea anemones.</title>
        <authorList>
            <person name="Oliveira J.S."/>
            <person name="Fuentes-Silva D."/>
            <person name="King G.F."/>
        </authorList>
    </citation>
    <scope>NOMENCLATURE</scope>
</reference>
<protein>
    <recommendedName>
        <fullName evidence="3">Delta-actitoxin-Avd1d</fullName>
        <shortName evidence="3">Delta-AITX-Avd1d</shortName>
    </recommendedName>
    <alternativeName>
        <fullName>ATX-V</fullName>
    </alternativeName>
    <alternativeName>
        <fullName evidence="4">As5</fullName>
    </alternativeName>
    <alternativeName>
        <fullName evidence="4">Toxin V</fullName>
    </alternativeName>
</protein>
<dbReference type="PIR" id="A01792">
    <property type="entry name" value="TZAZ5"/>
</dbReference>
<dbReference type="SMR" id="P01529"/>
<dbReference type="GO" id="GO:0005576">
    <property type="term" value="C:extracellular region"/>
    <property type="evidence" value="ECO:0007669"/>
    <property type="project" value="UniProtKB-SubCell"/>
</dbReference>
<dbReference type="GO" id="GO:0042151">
    <property type="term" value="C:nematocyst"/>
    <property type="evidence" value="ECO:0007669"/>
    <property type="project" value="UniProtKB-SubCell"/>
</dbReference>
<dbReference type="GO" id="GO:0017080">
    <property type="term" value="F:sodium channel regulator activity"/>
    <property type="evidence" value="ECO:0007669"/>
    <property type="project" value="UniProtKB-KW"/>
</dbReference>
<dbReference type="GO" id="GO:0090729">
    <property type="term" value="F:toxin activity"/>
    <property type="evidence" value="ECO:0007669"/>
    <property type="project" value="UniProtKB-KW"/>
</dbReference>
<dbReference type="GO" id="GO:0009966">
    <property type="term" value="P:regulation of signal transduction"/>
    <property type="evidence" value="ECO:0007669"/>
    <property type="project" value="InterPro"/>
</dbReference>
<dbReference type="Gene3D" id="2.20.20.10">
    <property type="entry name" value="Anthopleurin-A"/>
    <property type="match status" value="1"/>
</dbReference>
<dbReference type="InterPro" id="IPR000693">
    <property type="entry name" value="Anenome_toxin"/>
</dbReference>
<dbReference type="InterPro" id="IPR023355">
    <property type="entry name" value="Myo_ane_neurotoxin_sf"/>
</dbReference>
<dbReference type="Pfam" id="PF00706">
    <property type="entry name" value="Toxin_4"/>
    <property type="match status" value="1"/>
</dbReference>
<dbReference type="PIRSF" id="PIRSF001905">
    <property type="entry name" value="Anenome_toxin"/>
    <property type="match status" value="1"/>
</dbReference>
<dbReference type="SUPFAM" id="SSF57392">
    <property type="entry name" value="Defensin-like"/>
    <property type="match status" value="1"/>
</dbReference>
<comment type="function">
    <text evidence="2">Binds specifically to voltage-gated sodium channels (Nav), thereby delaying their inactivation during signal transduction. Thus it strongly stimulates mammalian cardiac muscle contraction.</text>
</comment>
<comment type="subcellular location">
    <subcellularLocation>
        <location evidence="5">Secreted</location>
    </subcellularLocation>
    <subcellularLocation>
        <location evidence="5">Nematocyst</location>
    </subcellularLocation>
</comment>
<comment type="similarity">
    <text evidence="5">Belongs to the sea anemone sodium channel inhibitory toxin family. Type I subfamily.</text>
</comment>
<comment type="caution">
    <text evidence="5">Opinions are divided on whether Anemonia viridis (Forsskal, 1775) and Anemonia sulcata (Pennant, 1777) are separate species.</text>
</comment>
<proteinExistence type="evidence at protein level"/>